<proteinExistence type="inferred from homology"/>
<organism>
    <name type="scientific">Staphylococcus aureus (strain MSSA476)</name>
    <dbReference type="NCBI Taxonomy" id="282459"/>
    <lineage>
        <taxon>Bacteria</taxon>
        <taxon>Bacillati</taxon>
        <taxon>Bacillota</taxon>
        <taxon>Bacilli</taxon>
        <taxon>Bacillales</taxon>
        <taxon>Staphylococcaceae</taxon>
        <taxon>Staphylococcus</taxon>
    </lineage>
</organism>
<comment type="function">
    <text evidence="1">H(+)-stimulated, divalent metal cation uptake system.</text>
</comment>
<comment type="subcellular location">
    <subcellularLocation>
        <location evidence="1">Cell membrane</location>
        <topology evidence="1">Multi-pass membrane protein</topology>
    </subcellularLocation>
</comment>
<comment type="similarity">
    <text evidence="1">Belongs to the NRAMP family.</text>
</comment>
<reference key="1">
    <citation type="journal article" date="2004" name="Proc. Natl. Acad. Sci. U.S.A.">
        <title>Complete genomes of two clinical Staphylococcus aureus strains: evidence for the rapid evolution of virulence and drug resistance.</title>
        <authorList>
            <person name="Holden M.T.G."/>
            <person name="Feil E.J."/>
            <person name="Lindsay J.A."/>
            <person name="Peacock S.J."/>
            <person name="Day N.P.J."/>
            <person name="Enright M.C."/>
            <person name="Foster T.J."/>
            <person name="Moore C.E."/>
            <person name="Hurst L."/>
            <person name="Atkin R."/>
            <person name="Barron A."/>
            <person name="Bason N."/>
            <person name="Bentley S.D."/>
            <person name="Chillingworth C."/>
            <person name="Chillingworth T."/>
            <person name="Churcher C."/>
            <person name="Clark L."/>
            <person name="Corton C."/>
            <person name="Cronin A."/>
            <person name="Doggett J."/>
            <person name="Dowd L."/>
            <person name="Feltwell T."/>
            <person name="Hance Z."/>
            <person name="Harris B."/>
            <person name="Hauser H."/>
            <person name="Holroyd S."/>
            <person name="Jagels K."/>
            <person name="James K.D."/>
            <person name="Lennard N."/>
            <person name="Line A."/>
            <person name="Mayes R."/>
            <person name="Moule S."/>
            <person name="Mungall K."/>
            <person name="Ormond D."/>
            <person name="Quail M.A."/>
            <person name="Rabbinowitsch E."/>
            <person name="Rutherford K.M."/>
            <person name="Sanders M."/>
            <person name="Sharp S."/>
            <person name="Simmonds M."/>
            <person name="Stevens K."/>
            <person name="Whitehead S."/>
            <person name="Barrell B.G."/>
            <person name="Spratt B.G."/>
            <person name="Parkhill J."/>
        </authorList>
    </citation>
    <scope>NUCLEOTIDE SEQUENCE [LARGE SCALE GENOMIC DNA]</scope>
    <source>
        <strain>MSSA476</strain>
    </source>
</reference>
<gene>
    <name evidence="1" type="primary">mntH</name>
    <name type="ordered locus">SAS1040</name>
</gene>
<name>MNTH_STAAS</name>
<evidence type="ECO:0000255" key="1">
    <source>
        <dbReference type="HAMAP-Rule" id="MF_00221"/>
    </source>
</evidence>
<dbReference type="EMBL" id="BX571857">
    <property type="protein sequence ID" value="CAG42814.1"/>
    <property type="molecule type" value="Genomic_DNA"/>
</dbReference>
<dbReference type="RefSeq" id="WP_001060842.1">
    <property type="nucleotide sequence ID" value="NC_002953.3"/>
</dbReference>
<dbReference type="SMR" id="Q6GAA9"/>
<dbReference type="KEGG" id="sas:SAS1040"/>
<dbReference type="HOGENOM" id="CLU_020088_2_0_9"/>
<dbReference type="GO" id="GO:0005886">
    <property type="term" value="C:plasma membrane"/>
    <property type="evidence" value="ECO:0007669"/>
    <property type="project" value="UniProtKB-SubCell"/>
</dbReference>
<dbReference type="GO" id="GO:0015086">
    <property type="term" value="F:cadmium ion transmembrane transporter activity"/>
    <property type="evidence" value="ECO:0007669"/>
    <property type="project" value="TreeGrafter"/>
</dbReference>
<dbReference type="GO" id="GO:0005384">
    <property type="term" value="F:manganese ion transmembrane transporter activity"/>
    <property type="evidence" value="ECO:0007669"/>
    <property type="project" value="TreeGrafter"/>
</dbReference>
<dbReference type="GO" id="GO:0046872">
    <property type="term" value="F:metal ion binding"/>
    <property type="evidence" value="ECO:0007669"/>
    <property type="project" value="UniProtKB-UniRule"/>
</dbReference>
<dbReference type="GO" id="GO:0015293">
    <property type="term" value="F:symporter activity"/>
    <property type="evidence" value="ECO:0007669"/>
    <property type="project" value="UniProtKB-UniRule"/>
</dbReference>
<dbReference type="GO" id="GO:0034755">
    <property type="term" value="P:iron ion transmembrane transport"/>
    <property type="evidence" value="ECO:0007669"/>
    <property type="project" value="TreeGrafter"/>
</dbReference>
<dbReference type="HAMAP" id="MF_00221">
    <property type="entry name" value="NRAMP"/>
    <property type="match status" value="1"/>
</dbReference>
<dbReference type="InterPro" id="IPR001046">
    <property type="entry name" value="NRAMP_fam"/>
</dbReference>
<dbReference type="NCBIfam" id="TIGR01197">
    <property type="entry name" value="nramp"/>
    <property type="match status" value="1"/>
</dbReference>
<dbReference type="NCBIfam" id="NF037982">
    <property type="entry name" value="Nramp_1"/>
    <property type="match status" value="1"/>
</dbReference>
<dbReference type="NCBIfam" id="NF001923">
    <property type="entry name" value="PRK00701.1"/>
    <property type="match status" value="1"/>
</dbReference>
<dbReference type="PANTHER" id="PTHR11706:SF33">
    <property type="entry name" value="NATURAL RESISTANCE-ASSOCIATED MACROPHAGE PROTEIN 2"/>
    <property type="match status" value="1"/>
</dbReference>
<dbReference type="PANTHER" id="PTHR11706">
    <property type="entry name" value="SOLUTE CARRIER PROTEIN FAMILY 11 MEMBER"/>
    <property type="match status" value="1"/>
</dbReference>
<dbReference type="Pfam" id="PF01566">
    <property type="entry name" value="Nramp"/>
    <property type="match status" value="1"/>
</dbReference>
<dbReference type="PRINTS" id="PR00447">
    <property type="entry name" value="NATRESASSCMP"/>
</dbReference>
<protein>
    <recommendedName>
        <fullName evidence="1">Divalent metal cation transporter MntH</fullName>
    </recommendedName>
</protein>
<feature type="chain" id="PRO_0000212638" description="Divalent metal cation transporter MntH">
    <location>
        <begin position="1"/>
        <end position="450"/>
    </location>
</feature>
<feature type="transmembrane region" description="Helical" evidence="1">
    <location>
        <begin position="34"/>
        <end position="54"/>
    </location>
</feature>
<feature type="transmembrane region" description="Helical" evidence="1">
    <location>
        <begin position="61"/>
        <end position="81"/>
    </location>
</feature>
<feature type="transmembrane region" description="Helical" evidence="1">
    <location>
        <begin position="108"/>
        <end position="128"/>
    </location>
</feature>
<feature type="transmembrane region" description="Helical" evidence="1">
    <location>
        <begin position="141"/>
        <end position="161"/>
    </location>
</feature>
<feature type="transmembrane region" description="Helical" evidence="1">
    <location>
        <begin position="170"/>
        <end position="190"/>
    </location>
</feature>
<feature type="transmembrane region" description="Helical" evidence="1">
    <location>
        <begin position="212"/>
        <end position="232"/>
    </location>
</feature>
<feature type="transmembrane region" description="Helical" evidence="1">
    <location>
        <begin position="263"/>
        <end position="283"/>
    </location>
</feature>
<feature type="transmembrane region" description="Helical" evidence="1">
    <location>
        <begin position="305"/>
        <end position="325"/>
    </location>
</feature>
<feature type="transmembrane region" description="Helical" evidence="1">
    <location>
        <begin position="361"/>
        <end position="381"/>
    </location>
</feature>
<feature type="transmembrane region" description="Helical" evidence="1">
    <location>
        <begin position="383"/>
        <end position="403"/>
    </location>
</feature>
<feature type="transmembrane region" description="Helical" evidence="1">
    <location>
        <begin position="422"/>
        <end position="442"/>
    </location>
</feature>
<accession>Q6GAA9</accession>
<keyword id="KW-1003">Cell membrane</keyword>
<keyword id="KW-0406">Ion transport</keyword>
<keyword id="KW-0472">Membrane</keyword>
<keyword id="KW-0769">Symport</keyword>
<keyword id="KW-0812">Transmembrane</keyword>
<keyword id="KW-1133">Transmembrane helix</keyword>
<keyword id="KW-0813">Transport</keyword>
<sequence>MNNKRHSTNEQLSLDEINNTIKFDHRSSNKQKFLSFLGPGLLVAVGYMDPGNWITSMQGGAQYGYTLLFVILISSLSAMLLQSMTVRLGIATGMDLAQMTRHYLSRPIAIIFWIIAELAIIATDIAEVIGSAIALNLLFNIPLIVGALITVLDVFLLLFIMKYGFRKIEAIVGTLIFTVLFIFIFEVYISSPQLNAVLNGFIPHSEIITNNGILYIALGIIGATIMPHNLYLHSSIVQSRTYSRHNNEEKAQAIKFATIDSNIQLSIAFVVNCLLLVLGASLFFNSNADDLGGFYDLYHALKTEPVLGATMGAIMSTLFAVALLASGQNSTITGTLAGQIVMEGFLRLHIPNWLRRLITRSLAVIPVIVCLIIFKGNAAKIEQLLVFSQVFLSIALPFCLIPLQLATSNKDLMGPFYNKTWVNIISWTLIIILSILNVYLIVQTFQELQS</sequence>